<evidence type="ECO:0000250" key="1"/>
<evidence type="ECO:0000250" key="2">
    <source>
        <dbReference type="UniProtKB" id="Q8ZNR3"/>
    </source>
</evidence>
<evidence type="ECO:0000256" key="3">
    <source>
        <dbReference type="SAM" id="MobiDB-lite"/>
    </source>
</evidence>
<evidence type="ECO:0000305" key="4"/>
<reference key="1">
    <citation type="journal article" date="2011" name="J. Bacteriol.">
        <title>Comparative genomics of 28 Salmonella enterica isolates: evidence for CRISPR-mediated adaptive sublineage evolution.</title>
        <authorList>
            <person name="Fricke W.F."/>
            <person name="Mammel M.K."/>
            <person name="McDermott P.F."/>
            <person name="Tartera C."/>
            <person name="White D.G."/>
            <person name="Leclerc J.E."/>
            <person name="Ravel J."/>
            <person name="Cebula T.A."/>
        </authorList>
    </citation>
    <scope>NUCLEOTIDE SEQUENCE [LARGE SCALE GENOMIC DNA]</scope>
    <source>
        <strain>CT_02021853</strain>
    </source>
</reference>
<gene>
    <name type="primary">sopA</name>
    <name type="ordered locus">SeD_A2402</name>
</gene>
<feature type="chain" id="PRO_0000395851" description="E3 ubiquitin-protein ligase SopA">
    <location>
        <begin position="1"/>
        <end position="782"/>
    </location>
</feature>
<feature type="region of interest" description="Disordered" evidence="3">
    <location>
        <begin position="137"/>
        <end position="171"/>
    </location>
</feature>
<feature type="compositionally biased region" description="Low complexity" evidence="3">
    <location>
        <begin position="157"/>
        <end position="171"/>
    </location>
</feature>
<feature type="active site" description="Glycyl thioester intermediate" evidence="1">
    <location>
        <position position="753"/>
    </location>
</feature>
<proteinExistence type="inferred from homology"/>
<name>SOPA_SALDC</name>
<comment type="function">
    <text evidence="2">Effector proteins function to alter host cell physiology and promote bacterial survival in host tissues. This protein is an E3 ubiquitin ligase that interferes with host's ubiquitination pathway.</text>
</comment>
<comment type="catalytic activity">
    <reaction>
        <text>S-ubiquitinyl-[E2 ubiquitin-conjugating enzyme]-L-cysteine + [acceptor protein]-L-lysine = [E2 ubiquitin-conjugating enzyme]-L-cysteine + N(6)-ubiquitinyl-[acceptor protein]-L-lysine.</text>
        <dbReference type="EC" id="2.3.2.26"/>
    </reaction>
</comment>
<comment type="subcellular location">
    <subcellularLocation>
        <location evidence="2">Secreted</location>
    </subcellularLocation>
    <subcellularLocation>
        <location evidence="2">Host cell</location>
    </subcellularLocation>
    <text evidence="2">Secreted via type III secretion system 1 (SPI-1 T3SS), and delivered into the host cell.</text>
</comment>
<comment type="PTM">
    <text evidence="2">Ubiquitinated in the presence of host E1 ubiquitin-activating enzyme, E2 ubiquitin-conjugating enzyme and ubiquitin.</text>
</comment>
<comment type="similarity">
    <text evidence="4">Belongs to the SopA E3 ligase family.</text>
</comment>
<protein>
    <recommendedName>
        <fullName>E3 ubiquitin-protein ligase SopA</fullName>
        <ecNumber>2.3.2.26</ecNumber>
    </recommendedName>
    <alternativeName>
        <fullName evidence="4">HECT-type E3 ubiquitin transferase SopA</fullName>
    </alternativeName>
    <alternativeName>
        <fullName>Salmonella outer protein A</fullName>
    </alternativeName>
    <alternativeName>
        <fullName>Secreted effector protein SopA</fullName>
    </alternativeName>
</protein>
<dbReference type="EC" id="2.3.2.26"/>
<dbReference type="EMBL" id="CP001144">
    <property type="protein sequence ID" value="ACH77818.1"/>
    <property type="molecule type" value="Genomic_DNA"/>
</dbReference>
<dbReference type="RefSeq" id="WP_000703992.1">
    <property type="nucleotide sequence ID" value="NC_011205.1"/>
</dbReference>
<dbReference type="SMR" id="B5FM34"/>
<dbReference type="KEGG" id="sed:SeD_A2402"/>
<dbReference type="HOGENOM" id="CLU_026158_0_0_6"/>
<dbReference type="Proteomes" id="UP000008322">
    <property type="component" value="Chromosome"/>
</dbReference>
<dbReference type="GO" id="GO:0005576">
    <property type="term" value="C:extracellular region"/>
    <property type="evidence" value="ECO:0000250"/>
    <property type="project" value="UniProtKB"/>
</dbReference>
<dbReference type="GO" id="GO:0043657">
    <property type="term" value="C:host cell"/>
    <property type="evidence" value="ECO:0007669"/>
    <property type="project" value="UniProtKB-SubCell"/>
</dbReference>
<dbReference type="GO" id="GO:0004842">
    <property type="term" value="F:ubiquitin-protein transferase activity"/>
    <property type="evidence" value="ECO:0000250"/>
    <property type="project" value="UniProtKB"/>
</dbReference>
<dbReference type="GO" id="GO:0016567">
    <property type="term" value="P:protein ubiquitination"/>
    <property type="evidence" value="ECO:0000250"/>
    <property type="project" value="UniProtKB"/>
</dbReference>
<dbReference type="FunFam" id="1.25.40.300:FF:000001">
    <property type="entry name" value="SPI-1 type III secretion system effector HECT-type E3 ubiquitin transferase SopA"/>
    <property type="match status" value="1"/>
</dbReference>
<dbReference type="FunFam" id="2.160.20.80:FF:000005">
    <property type="entry name" value="SPI-1 type III secretion system effector HECT-type E3 ubiquitin transferase SopA"/>
    <property type="match status" value="1"/>
</dbReference>
<dbReference type="Gene3D" id="2.160.20.80">
    <property type="entry name" value="E3 ubiquitin-protein ligase SopA"/>
    <property type="match status" value="1"/>
</dbReference>
<dbReference type="Gene3D" id="1.10.4140.10">
    <property type="entry name" value="effector protein (NleL)"/>
    <property type="match status" value="1"/>
</dbReference>
<dbReference type="Gene3D" id="3.40.1850.10">
    <property type="entry name" value="HECT-like ubiquitin ligase"/>
    <property type="match status" value="1"/>
</dbReference>
<dbReference type="Gene3D" id="1.25.40.300">
    <property type="entry name" value="Putative secreted effector protein"/>
    <property type="match status" value="1"/>
</dbReference>
<dbReference type="InterPro" id="IPR025725">
    <property type="entry name" value="SopA-like_cat"/>
</dbReference>
<dbReference type="InterPro" id="IPR038270">
    <property type="entry name" value="SopA-like_catalytic_sf"/>
</dbReference>
<dbReference type="InterPro" id="IPR025726">
    <property type="entry name" value="SopA-like_central"/>
</dbReference>
<dbReference type="NCBIfam" id="NF011904">
    <property type="entry name" value="PRK15377.1"/>
    <property type="match status" value="1"/>
</dbReference>
<dbReference type="Pfam" id="PF13981">
    <property type="entry name" value="SopA"/>
    <property type="match status" value="1"/>
</dbReference>
<dbReference type="Pfam" id="PF13979">
    <property type="entry name" value="SopA_C"/>
    <property type="match status" value="1"/>
</dbReference>
<dbReference type="SUPFAM" id="SSF141571">
    <property type="entry name" value="Pentapeptide repeat-like"/>
    <property type="match status" value="1"/>
</dbReference>
<keyword id="KW-0964">Secreted</keyword>
<keyword id="KW-0808">Transferase</keyword>
<keyword id="KW-0832">Ubl conjugation</keyword>
<keyword id="KW-0833">Ubl conjugation pathway</keyword>
<keyword id="KW-0843">Virulence</keyword>
<sequence length="782" mass="86752">MKISSGAINFSTIPNQVKKLITSIREHTKNGLASKITSVKNTHTSLNEKFKTGKDSPIEFALPQKIKDFFQPKDKNTLNKTLITVKNIKDTNNAGKKNISAEDVSKMNAAFMRKHIANQTCDYNYRMTGAAPLPGGVSVSANNRPTVSEGRTPPVSPSLSLQATSSPSSPADWAKKLTDAVLRQKAGETLTAADRDFSNADFRNITFSKILPPSFMERDGDIIKGFNFSNSKFTYSDISHLHFDECRFTYSTLSDVVCSNTKFSNSDMNEVVLQYSITTQQQPSFIDTTLKNTLIRHKANLSGVILNEPDNSSPPSVSGGGNFIRLGDIWLQMPLLWTENAVDGFLNHEHNNGKSILMTIDSLPDKYSQEKVQAMEDLVKSLRGGRLTEACIRPVESSLVSVLAHPPYTQSALIREWLGPVQERFFAHQCQTYNDVPLPTPDTYYQQRILPVLLDSFDRNSAAMTTHSGLFNQVILHCMTGVDCTDGTRQKAAALYEQYLAHPAVSPHIHNGLFGNYDGSSDWTTRAADNFLLLSSQDSDTAMMLSTDTLLTMLNPTPDTAWDNFYLLRAGENVSTAQISPVELFRHDFPVFLAAFNQQATQRRFGELIDIILSTEEHGELNQQFIAATNQKHSTVKLIDDASVSRLATIFAPLLPEGKLSPAHYQHILSAYHLTDATPQKQAETLFCLSTAFARYSSSAIFGTEHDSPPALRGYAEALMQKAWELSPAIFPSSEQFTDWSDRFHGLHGAFTCTSVVADSMQRHARKYFPSVLSSILPLSWA</sequence>
<accession>B5FM34</accession>
<organism>
    <name type="scientific">Salmonella dublin (strain CT_02021853)</name>
    <dbReference type="NCBI Taxonomy" id="439851"/>
    <lineage>
        <taxon>Bacteria</taxon>
        <taxon>Pseudomonadati</taxon>
        <taxon>Pseudomonadota</taxon>
        <taxon>Gammaproteobacteria</taxon>
        <taxon>Enterobacterales</taxon>
        <taxon>Enterobacteriaceae</taxon>
        <taxon>Salmonella</taxon>
    </lineage>
</organism>